<accession>Q5RAQ2</accession>
<evidence type="ECO:0000250" key="1"/>
<evidence type="ECO:0000255" key="2">
    <source>
        <dbReference type="PROSITE-ProRule" id="PRU00192"/>
    </source>
</evidence>
<evidence type="ECO:0000256" key="3">
    <source>
        <dbReference type="SAM" id="MobiDB-lite"/>
    </source>
</evidence>
<evidence type="ECO:0000305" key="4"/>
<comment type="subunit">
    <text evidence="1">Interacts with SH3D19.</text>
</comment>
<comment type="similarity">
    <text evidence="4">Belongs to the SH3YL1 family.</text>
</comment>
<dbReference type="EMBL" id="CR857890">
    <property type="protein sequence ID" value="CAH90143.1"/>
    <property type="molecule type" value="mRNA"/>
</dbReference>
<dbReference type="EMBL" id="CR858962">
    <property type="protein sequence ID" value="CAH91158.1"/>
    <property type="molecule type" value="mRNA"/>
</dbReference>
<dbReference type="RefSeq" id="NP_001125036.1">
    <property type="nucleotide sequence ID" value="NM_001131564.1"/>
</dbReference>
<dbReference type="RefSeq" id="XP_009235862.2">
    <property type="nucleotide sequence ID" value="XM_009237587.3"/>
</dbReference>
<dbReference type="RefSeq" id="XP_024097656.2">
    <property type="nucleotide sequence ID" value="XM_024241888.2"/>
</dbReference>
<dbReference type="RefSeq" id="XP_024097657.2">
    <property type="nucleotide sequence ID" value="XM_024241889.2"/>
</dbReference>
<dbReference type="RefSeq" id="XP_024097658.2">
    <property type="nucleotide sequence ID" value="XM_024241890.3"/>
</dbReference>
<dbReference type="RefSeq" id="XP_024097659.2">
    <property type="nucleotide sequence ID" value="XM_024241891.3"/>
</dbReference>
<dbReference type="RefSeq" id="XP_024097660.2">
    <property type="nucleotide sequence ID" value="XM_024241892.2"/>
</dbReference>
<dbReference type="RefSeq" id="XP_054401423.1">
    <property type="nucleotide sequence ID" value="XM_054545448.1"/>
</dbReference>
<dbReference type="RefSeq" id="XP_054401432.1">
    <property type="nucleotide sequence ID" value="XM_054545457.2"/>
</dbReference>
<dbReference type="RefSeq" id="XP_054401440.1">
    <property type="nucleotide sequence ID" value="XM_054545465.1"/>
</dbReference>
<dbReference type="RefSeq" id="XP_054401451.1">
    <property type="nucleotide sequence ID" value="XM_054545476.1"/>
</dbReference>
<dbReference type="RefSeq" id="XP_054401465.1">
    <property type="nucleotide sequence ID" value="XM_054545490.1"/>
</dbReference>
<dbReference type="RefSeq" id="XP_054401472.1">
    <property type="nucleotide sequence ID" value="XM_054545497.1"/>
</dbReference>
<dbReference type="RefSeq" id="XP_054401475.1">
    <property type="nucleotide sequence ID" value="XM_054545500.1"/>
</dbReference>
<dbReference type="RefSeq" id="XP_054401488.1">
    <property type="nucleotide sequence ID" value="XM_054545513.1"/>
</dbReference>
<dbReference type="RefSeq" id="XP_054401515.1">
    <property type="nucleotide sequence ID" value="XM_054545540.1"/>
</dbReference>
<dbReference type="RefSeq" id="XP_063569285.1">
    <property type="nucleotide sequence ID" value="XM_063713215.1"/>
</dbReference>
<dbReference type="RefSeq" id="XP_063569286.1">
    <property type="nucleotide sequence ID" value="XM_063713216.1"/>
</dbReference>
<dbReference type="BMRB" id="Q5RAQ2"/>
<dbReference type="SMR" id="Q5RAQ2"/>
<dbReference type="FunCoup" id="Q5RAQ2">
    <property type="interactions" value="19"/>
</dbReference>
<dbReference type="STRING" id="9601.ENSPPYP00000014172"/>
<dbReference type="GeneID" id="100171917"/>
<dbReference type="KEGG" id="pon:100171917"/>
<dbReference type="CTD" id="26751"/>
<dbReference type="eggNOG" id="KOG1843">
    <property type="taxonomic scope" value="Eukaryota"/>
</dbReference>
<dbReference type="InParanoid" id="Q5RAQ2"/>
<dbReference type="OrthoDB" id="443981at2759"/>
<dbReference type="Proteomes" id="UP000001595">
    <property type="component" value="Unplaced"/>
</dbReference>
<dbReference type="GO" id="GO:0032587">
    <property type="term" value="C:ruffle membrane"/>
    <property type="evidence" value="ECO:0007669"/>
    <property type="project" value="TreeGrafter"/>
</dbReference>
<dbReference type="GO" id="GO:0035091">
    <property type="term" value="F:phosphatidylinositol binding"/>
    <property type="evidence" value="ECO:0007669"/>
    <property type="project" value="TreeGrafter"/>
</dbReference>
<dbReference type="GO" id="GO:1900027">
    <property type="term" value="P:regulation of ruffle assembly"/>
    <property type="evidence" value="ECO:0007669"/>
    <property type="project" value="TreeGrafter"/>
</dbReference>
<dbReference type="CDD" id="cd11841">
    <property type="entry name" value="SH3_SH3YL1_like"/>
    <property type="match status" value="1"/>
</dbReference>
<dbReference type="CDD" id="cd11525">
    <property type="entry name" value="SYLF_SH3YL1_like"/>
    <property type="match status" value="1"/>
</dbReference>
<dbReference type="FunFam" id="2.30.30.40:FF:000100">
    <property type="entry name" value="SH3 domain-containing YSC84-like protein 1"/>
    <property type="match status" value="1"/>
</dbReference>
<dbReference type="Gene3D" id="2.30.30.40">
    <property type="entry name" value="SH3 Domains"/>
    <property type="match status" value="1"/>
</dbReference>
<dbReference type="InterPro" id="IPR036028">
    <property type="entry name" value="SH3-like_dom_sf"/>
</dbReference>
<dbReference type="InterPro" id="IPR001452">
    <property type="entry name" value="SH3_domain"/>
</dbReference>
<dbReference type="InterPro" id="IPR051702">
    <property type="entry name" value="SH3_domain_YSC84-like"/>
</dbReference>
<dbReference type="InterPro" id="IPR035511">
    <property type="entry name" value="SH3YL1_SH3"/>
</dbReference>
<dbReference type="InterPro" id="IPR033643">
    <property type="entry name" value="SYLF_SH3YL1-like"/>
</dbReference>
<dbReference type="InterPro" id="IPR007461">
    <property type="entry name" value="Ysc84_actin-binding"/>
</dbReference>
<dbReference type="PANTHER" id="PTHR15629:SF2">
    <property type="entry name" value="SH3 DOMAIN-CONTAINING YSC84-LIKE PROTEIN 1"/>
    <property type="match status" value="1"/>
</dbReference>
<dbReference type="PANTHER" id="PTHR15629">
    <property type="entry name" value="SH3YL1 PROTEIN"/>
    <property type="match status" value="1"/>
</dbReference>
<dbReference type="Pfam" id="PF14604">
    <property type="entry name" value="SH3_9"/>
    <property type="match status" value="1"/>
</dbReference>
<dbReference type="Pfam" id="PF04366">
    <property type="entry name" value="Ysc84"/>
    <property type="match status" value="1"/>
</dbReference>
<dbReference type="PRINTS" id="PR00452">
    <property type="entry name" value="SH3DOMAIN"/>
</dbReference>
<dbReference type="SMART" id="SM00326">
    <property type="entry name" value="SH3"/>
    <property type="match status" value="1"/>
</dbReference>
<dbReference type="SUPFAM" id="SSF50044">
    <property type="entry name" value="SH3-domain"/>
    <property type="match status" value="1"/>
</dbReference>
<dbReference type="PROSITE" id="PS50002">
    <property type="entry name" value="SH3"/>
    <property type="match status" value="1"/>
</dbReference>
<sequence length="342" mass="37134">MNNPIPSNLKSEAKKAAKILREFTEITSRNGPDKIIPAHVIAKAKGLAILSVIKAGFLVTARGGSGIVVARLPDGKWSAPSAIGIAGLGGGFEIGIEVSDLVIILNYDRAVEAFAKGGNLTLGGNLTVAVGPLGRNLEGNVALRNSAAVFTYCKSRGLFAGVSLEGSCLIERKETNRKFYCQDIRAYDILFGDTPRPAQAEDLYEILDSFTEKYENEGQRINARKAAREQRKSSAKELPAKPLSRPLQSSAPVQLNSGSQSNRNEYKLYPGLSSYHERVGNLNQPIEVTALYSFEGQQPGDLNFQAGDRITVISKTDSHFDWWEGKLRGQTGIFPANYVTMN</sequence>
<organism>
    <name type="scientific">Pongo abelii</name>
    <name type="common">Sumatran orangutan</name>
    <name type="synonym">Pongo pygmaeus abelii</name>
    <dbReference type="NCBI Taxonomy" id="9601"/>
    <lineage>
        <taxon>Eukaryota</taxon>
        <taxon>Metazoa</taxon>
        <taxon>Chordata</taxon>
        <taxon>Craniata</taxon>
        <taxon>Vertebrata</taxon>
        <taxon>Euteleostomi</taxon>
        <taxon>Mammalia</taxon>
        <taxon>Eutheria</taxon>
        <taxon>Euarchontoglires</taxon>
        <taxon>Primates</taxon>
        <taxon>Haplorrhini</taxon>
        <taxon>Catarrhini</taxon>
        <taxon>Hominidae</taxon>
        <taxon>Pongo</taxon>
    </lineage>
</organism>
<name>SH3Y1_PONAB</name>
<feature type="chain" id="PRO_0000341562" description="SH3 domain-containing YSC84-like protein 1">
    <location>
        <begin position="1"/>
        <end position="342"/>
    </location>
</feature>
<feature type="domain" description="SH3" evidence="2">
    <location>
        <begin position="283"/>
        <end position="342"/>
    </location>
</feature>
<feature type="region of interest" description="Disordered" evidence="3">
    <location>
        <begin position="218"/>
        <end position="264"/>
    </location>
</feature>
<feature type="compositionally biased region" description="Basic and acidic residues" evidence="3">
    <location>
        <begin position="226"/>
        <end position="239"/>
    </location>
</feature>
<feature type="compositionally biased region" description="Polar residues" evidence="3">
    <location>
        <begin position="246"/>
        <end position="263"/>
    </location>
</feature>
<keyword id="KW-1185">Reference proteome</keyword>
<keyword id="KW-0728">SH3 domain</keyword>
<proteinExistence type="evidence at transcript level"/>
<protein>
    <recommendedName>
        <fullName>SH3 domain-containing YSC84-like protein 1</fullName>
    </recommendedName>
</protein>
<gene>
    <name type="primary">SH3YL1</name>
</gene>
<reference key="1">
    <citation type="submission" date="2004-11" db="EMBL/GenBank/DDBJ databases">
        <authorList>
            <consortium name="The German cDNA consortium"/>
        </authorList>
    </citation>
    <scope>NUCLEOTIDE SEQUENCE [LARGE SCALE MRNA]</scope>
    <source>
        <tissue>Brain cortex</tissue>
        <tissue>Kidney</tissue>
    </source>
</reference>